<feature type="chain" id="PRO_0000390053" description="NADH-quinone oxidoreductase subunit K">
    <location>
        <begin position="1"/>
        <end position="100"/>
    </location>
</feature>
<feature type="transmembrane region" description="Helical" evidence="1">
    <location>
        <begin position="4"/>
        <end position="24"/>
    </location>
</feature>
<feature type="transmembrane region" description="Helical" evidence="1">
    <location>
        <begin position="28"/>
        <end position="48"/>
    </location>
</feature>
<feature type="transmembrane region" description="Helical" evidence="1">
    <location>
        <begin position="60"/>
        <end position="80"/>
    </location>
</feature>
<accession>A1ADC7</accession>
<proteinExistence type="inferred from homology"/>
<comment type="function">
    <text evidence="1">NDH-1 shuttles electrons from NADH, via FMN and iron-sulfur (Fe-S) centers, to quinones in the respiratory chain. The immediate electron acceptor for the enzyme in this species is believed to be ubiquinone. Couples the redox reaction to proton translocation (for every two electrons transferred, four hydrogen ions are translocated across the cytoplasmic membrane), and thus conserves the redox energy in a proton gradient.</text>
</comment>
<comment type="catalytic activity">
    <reaction evidence="1">
        <text>a quinone + NADH + 5 H(+)(in) = a quinol + NAD(+) + 4 H(+)(out)</text>
        <dbReference type="Rhea" id="RHEA:57888"/>
        <dbReference type="ChEBI" id="CHEBI:15378"/>
        <dbReference type="ChEBI" id="CHEBI:24646"/>
        <dbReference type="ChEBI" id="CHEBI:57540"/>
        <dbReference type="ChEBI" id="CHEBI:57945"/>
        <dbReference type="ChEBI" id="CHEBI:132124"/>
    </reaction>
</comment>
<comment type="subunit">
    <text evidence="1">NDH-1 is composed of 13 different subunits. Subunits NuoA, H, J, K, L, M, N constitute the membrane sector of the complex.</text>
</comment>
<comment type="subcellular location">
    <subcellularLocation>
        <location evidence="1">Cell inner membrane</location>
        <topology evidence="1">Multi-pass membrane protein</topology>
    </subcellularLocation>
</comment>
<comment type="similarity">
    <text evidence="1">Belongs to the complex I subunit 4L family.</text>
</comment>
<gene>
    <name evidence="1" type="primary">nuoK</name>
    <name type="ordered locus">Ecok1_21730</name>
    <name type="ORF">APECO1_4286</name>
</gene>
<evidence type="ECO:0000255" key="1">
    <source>
        <dbReference type="HAMAP-Rule" id="MF_01456"/>
    </source>
</evidence>
<dbReference type="EC" id="7.1.1.-" evidence="1"/>
<dbReference type="EMBL" id="CP000468">
    <property type="protein sequence ID" value="ABJ01667.1"/>
    <property type="molecule type" value="Genomic_DNA"/>
</dbReference>
<dbReference type="RefSeq" id="WP_000612644.1">
    <property type="nucleotide sequence ID" value="NZ_CADILS010000025.1"/>
</dbReference>
<dbReference type="SMR" id="A1ADC7"/>
<dbReference type="GeneID" id="93033872"/>
<dbReference type="KEGG" id="ecv:APECO1_4286"/>
<dbReference type="HOGENOM" id="CLU_144724_0_1_6"/>
<dbReference type="Proteomes" id="UP000008216">
    <property type="component" value="Chromosome"/>
</dbReference>
<dbReference type="GO" id="GO:0030964">
    <property type="term" value="C:NADH dehydrogenase complex"/>
    <property type="evidence" value="ECO:0007669"/>
    <property type="project" value="TreeGrafter"/>
</dbReference>
<dbReference type="GO" id="GO:0005886">
    <property type="term" value="C:plasma membrane"/>
    <property type="evidence" value="ECO:0007669"/>
    <property type="project" value="UniProtKB-SubCell"/>
</dbReference>
<dbReference type="GO" id="GO:0050136">
    <property type="term" value="F:NADH:ubiquinone reductase (non-electrogenic) activity"/>
    <property type="evidence" value="ECO:0007669"/>
    <property type="project" value="UniProtKB-UniRule"/>
</dbReference>
<dbReference type="GO" id="GO:0048038">
    <property type="term" value="F:quinone binding"/>
    <property type="evidence" value="ECO:0007669"/>
    <property type="project" value="UniProtKB-KW"/>
</dbReference>
<dbReference type="GO" id="GO:0042773">
    <property type="term" value="P:ATP synthesis coupled electron transport"/>
    <property type="evidence" value="ECO:0007669"/>
    <property type="project" value="InterPro"/>
</dbReference>
<dbReference type="FunFam" id="1.10.287.3510:FF:000001">
    <property type="entry name" value="NADH-quinone oxidoreductase subunit K"/>
    <property type="match status" value="1"/>
</dbReference>
<dbReference type="Gene3D" id="1.10.287.3510">
    <property type="match status" value="1"/>
</dbReference>
<dbReference type="HAMAP" id="MF_01456">
    <property type="entry name" value="NDH1_NuoK"/>
    <property type="match status" value="1"/>
</dbReference>
<dbReference type="InterPro" id="IPR001133">
    <property type="entry name" value="NADH_UbQ_OxRdtase_chain4L/K"/>
</dbReference>
<dbReference type="InterPro" id="IPR039428">
    <property type="entry name" value="NUOK/Mnh_C1-like"/>
</dbReference>
<dbReference type="NCBIfam" id="NF004319">
    <property type="entry name" value="PRK05715.1-1"/>
    <property type="match status" value="1"/>
</dbReference>
<dbReference type="NCBIfam" id="NF004320">
    <property type="entry name" value="PRK05715.1-2"/>
    <property type="match status" value="1"/>
</dbReference>
<dbReference type="PANTHER" id="PTHR11434:SF16">
    <property type="entry name" value="NADH-UBIQUINONE OXIDOREDUCTASE CHAIN 4L"/>
    <property type="match status" value="1"/>
</dbReference>
<dbReference type="PANTHER" id="PTHR11434">
    <property type="entry name" value="NADH-UBIQUINONE OXIDOREDUCTASE SUBUNIT ND4L"/>
    <property type="match status" value="1"/>
</dbReference>
<dbReference type="Pfam" id="PF00420">
    <property type="entry name" value="Oxidored_q2"/>
    <property type="match status" value="1"/>
</dbReference>
<protein>
    <recommendedName>
        <fullName evidence="1">NADH-quinone oxidoreductase subunit K</fullName>
        <ecNumber evidence="1">7.1.1.-</ecNumber>
    </recommendedName>
    <alternativeName>
        <fullName evidence="1">NADH dehydrogenase I subunit K</fullName>
    </alternativeName>
    <alternativeName>
        <fullName evidence="1">NDH-1 subunit K</fullName>
    </alternativeName>
</protein>
<reference key="1">
    <citation type="journal article" date="2007" name="J. Bacteriol.">
        <title>The genome sequence of avian pathogenic Escherichia coli strain O1:K1:H7 shares strong similarities with human extraintestinal pathogenic E. coli genomes.</title>
        <authorList>
            <person name="Johnson T.J."/>
            <person name="Kariyawasam S."/>
            <person name="Wannemuehler Y."/>
            <person name="Mangiamele P."/>
            <person name="Johnson S.J."/>
            <person name="Doetkott C."/>
            <person name="Skyberg J.A."/>
            <person name="Lynne A.M."/>
            <person name="Johnson J.R."/>
            <person name="Nolan L.K."/>
        </authorList>
    </citation>
    <scope>NUCLEOTIDE SEQUENCE [LARGE SCALE GENOMIC DNA]</scope>
</reference>
<sequence>MIPLQHGLILAAILFVLGLTGLVIRRNLLFMLIGLEIMINASALAFVVAGSYWGQTDGQVMYILAISLAAAEASIGLALLLQLHRRRQNLNIDSVSEMRG</sequence>
<organism>
    <name type="scientific">Escherichia coli O1:K1 / APEC</name>
    <dbReference type="NCBI Taxonomy" id="405955"/>
    <lineage>
        <taxon>Bacteria</taxon>
        <taxon>Pseudomonadati</taxon>
        <taxon>Pseudomonadota</taxon>
        <taxon>Gammaproteobacteria</taxon>
        <taxon>Enterobacterales</taxon>
        <taxon>Enterobacteriaceae</taxon>
        <taxon>Escherichia</taxon>
    </lineage>
</organism>
<name>NUOK_ECOK1</name>
<keyword id="KW-0997">Cell inner membrane</keyword>
<keyword id="KW-1003">Cell membrane</keyword>
<keyword id="KW-0472">Membrane</keyword>
<keyword id="KW-0520">NAD</keyword>
<keyword id="KW-0874">Quinone</keyword>
<keyword id="KW-1185">Reference proteome</keyword>
<keyword id="KW-1278">Translocase</keyword>
<keyword id="KW-0812">Transmembrane</keyword>
<keyword id="KW-1133">Transmembrane helix</keyword>
<keyword id="KW-0813">Transport</keyword>
<keyword id="KW-0830">Ubiquinone</keyword>